<keyword id="KW-0963">Cytoplasm</keyword>
<keyword id="KW-0539">Nucleus</keyword>
<keyword id="KW-0653">Protein transport</keyword>
<keyword id="KW-1185">Reference proteome</keyword>
<keyword id="KW-0678">Repressor</keyword>
<keyword id="KW-0804">Transcription</keyword>
<keyword id="KW-0805">Transcription regulation</keyword>
<keyword id="KW-0813">Transport</keyword>
<reference key="1">
    <citation type="journal article" date="2004" name="Proc. Natl. Acad. Sci. U.S.A.">
        <title>The diploid genome sequence of Candida albicans.</title>
        <authorList>
            <person name="Jones T."/>
            <person name="Federspiel N.A."/>
            <person name="Chibana H."/>
            <person name="Dungan J."/>
            <person name="Kalman S."/>
            <person name="Magee B.B."/>
            <person name="Newport G."/>
            <person name="Thorstenson Y.R."/>
            <person name="Agabian N."/>
            <person name="Magee P.T."/>
            <person name="Davis R.W."/>
            <person name="Scherer S."/>
        </authorList>
    </citation>
    <scope>NUCLEOTIDE SEQUENCE [LARGE SCALE GENOMIC DNA]</scope>
    <source>
        <strain>SC5314 / ATCC MYA-2876</strain>
    </source>
</reference>
<reference key="2">
    <citation type="journal article" date="2007" name="Genome Biol.">
        <title>Assembly of the Candida albicans genome into sixteen supercontigs aligned on the eight chromosomes.</title>
        <authorList>
            <person name="van het Hoog M."/>
            <person name="Rast T.J."/>
            <person name="Martchenko M."/>
            <person name="Grindle S."/>
            <person name="Dignard D."/>
            <person name="Hogues H."/>
            <person name="Cuomo C."/>
            <person name="Berriman M."/>
            <person name="Scherer S."/>
            <person name="Magee B.B."/>
            <person name="Whiteway M."/>
            <person name="Chibana H."/>
            <person name="Nantel A."/>
            <person name="Magee P.T."/>
        </authorList>
    </citation>
    <scope>GENOME REANNOTATION</scope>
    <source>
        <strain>SC5314 / ATCC MYA-2876</strain>
    </source>
</reference>
<reference key="3">
    <citation type="journal article" date="2013" name="Genome Biol.">
        <title>Assembly of a phased diploid Candida albicans genome facilitates allele-specific measurements and provides a simple model for repeat and indel structure.</title>
        <authorList>
            <person name="Muzzey D."/>
            <person name="Schwartz K."/>
            <person name="Weissman J.S."/>
            <person name="Sherlock G."/>
        </authorList>
    </citation>
    <scope>NUCLEOTIDE SEQUENCE [LARGE SCALE GENOMIC DNA]</scope>
    <scope>GENOME REANNOTATION</scope>
    <source>
        <strain>SC5314 / ATCC MYA-2876</strain>
    </source>
</reference>
<proteinExistence type="inferred from homology"/>
<gene>
    <name type="primary">EGD1</name>
    <name type="ordered locus">CAALFM_C111650WA</name>
    <name type="ORF">CaO19.1154</name>
    <name type="ORF">CaO19.8746</name>
</gene>
<protein>
    <recommendedName>
        <fullName>Nascent polypeptide-associated complex subunit beta</fullName>
        <shortName>NAC-beta</shortName>
    </recommendedName>
    <alternativeName>
        <fullName>Beta-NAC</fullName>
    </alternativeName>
</protein>
<evidence type="ECO:0000250" key="1"/>
<evidence type="ECO:0000255" key="2">
    <source>
        <dbReference type="PROSITE-ProRule" id="PRU00507"/>
    </source>
</evidence>
<evidence type="ECO:0000256" key="3">
    <source>
        <dbReference type="SAM" id="MobiDB-lite"/>
    </source>
</evidence>
<evidence type="ECO:0000305" key="4"/>
<dbReference type="EMBL" id="CP017623">
    <property type="protein sequence ID" value="AOW26789.1"/>
    <property type="molecule type" value="Genomic_DNA"/>
</dbReference>
<dbReference type="RefSeq" id="XP_713021.1">
    <property type="nucleotide sequence ID" value="XM_707928.1"/>
</dbReference>
<dbReference type="SMR" id="Q59TU0"/>
<dbReference type="FunCoup" id="Q59TU0">
    <property type="interactions" value="1290"/>
</dbReference>
<dbReference type="STRING" id="237561.Q59TU0"/>
<dbReference type="EnsemblFungi" id="C1_11650W_A-T">
    <property type="protein sequence ID" value="C1_11650W_A-T-p1"/>
    <property type="gene ID" value="C1_11650W_A"/>
</dbReference>
<dbReference type="GeneID" id="3645340"/>
<dbReference type="KEGG" id="cal:CAALFM_C111650WA"/>
<dbReference type="CGD" id="CAL0000174763">
    <property type="gene designation" value="EGD1"/>
</dbReference>
<dbReference type="VEuPathDB" id="FungiDB:C1_11650W_A"/>
<dbReference type="eggNOG" id="KOG2240">
    <property type="taxonomic scope" value="Eukaryota"/>
</dbReference>
<dbReference type="HOGENOM" id="CLU_098726_2_2_1"/>
<dbReference type="InParanoid" id="Q59TU0"/>
<dbReference type="OMA" id="AGDTYME"/>
<dbReference type="OrthoDB" id="8033832at2759"/>
<dbReference type="PRO" id="PR:Q59TU0"/>
<dbReference type="Proteomes" id="UP000000559">
    <property type="component" value="Chromosome 1"/>
</dbReference>
<dbReference type="GO" id="GO:0005829">
    <property type="term" value="C:cytosol"/>
    <property type="evidence" value="ECO:0000318"/>
    <property type="project" value="GO_Central"/>
</dbReference>
<dbReference type="GO" id="GO:0005854">
    <property type="term" value="C:nascent polypeptide-associated complex"/>
    <property type="evidence" value="ECO:0000318"/>
    <property type="project" value="GO_Central"/>
</dbReference>
<dbReference type="GO" id="GO:0005634">
    <property type="term" value="C:nucleus"/>
    <property type="evidence" value="ECO:0007669"/>
    <property type="project" value="UniProtKB-SubCell"/>
</dbReference>
<dbReference type="GO" id="GO:0015031">
    <property type="term" value="P:protein transport"/>
    <property type="evidence" value="ECO:0007669"/>
    <property type="project" value="UniProtKB-KW"/>
</dbReference>
<dbReference type="CDD" id="cd22055">
    <property type="entry name" value="NAC_BTF3"/>
    <property type="match status" value="1"/>
</dbReference>
<dbReference type="FunFam" id="2.20.70.30:FF:000001">
    <property type="entry name" value="Transcription factor BTF3 homolog"/>
    <property type="match status" value="1"/>
</dbReference>
<dbReference type="Gene3D" id="2.20.70.30">
    <property type="entry name" value="Nascent polypeptide-associated complex domain"/>
    <property type="match status" value="1"/>
</dbReference>
<dbReference type="InterPro" id="IPR039370">
    <property type="entry name" value="BTF3"/>
</dbReference>
<dbReference type="InterPro" id="IPR038187">
    <property type="entry name" value="NAC_A/B_dom_sf"/>
</dbReference>
<dbReference type="InterPro" id="IPR002715">
    <property type="entry name" value="Nas_poly-pep-assoc_cplx_dom"/>
</dbReference>
<dbReference type="PANTHER" id="PTHR10351">
    <property type="entry name" value="TRANSCRIPTION FACTOR BTF3 FAMILY MEMBER"/>
    <property type="match status" value="1"/>
</dbReference>
<dbReference type="Pfam" id="PF01849">
    <property type="entry name" value="NAC"/>
    <property type="match status" value="1"/>
</dbReference>
<dbReference type="SMART" id="SM01407">
    <property type="entry name" value="NAC"/>
    <property type="match status" value="1"/>
</dbReference>
<dbReference type="PROSITE" id="PS51151">
    <property type="entry name" value="NAC_AB"/>
    <property type="match status" value="1"/>
</dbReference>
<name>NACB_CANAL</name>
<sequence length="157" mass="17031">MPVDPEKLAKLQKSSAKKVGGSRVKAKKNIKTEQDDTKLIEALGKLKATKIEGVEEANFFREDGKVLHFNRVGVQGAPASNTFAFTGYPQEKNITQLIPQILPQLGAENLEILRQLAEQIQAGKTPKDFNTGSANAAADAGGEDIPDLVDQKFDDVE</sequence>
<accession>Q59TU0</accession>
<accession>A0A1D8PF65</accession>
<feature type="chain" id="PRO_0000273504" description="Nascent polypeptide-associated complex subunit beta">
    <location>
        <begin position="1"/>
        <end position="157"/>
    </location>
</feature>
<feature type="domain" description="NAC-A/B" evidence="2">
    <location>
        <begin position="33"/>
        <end position="98"/>
    </location>
</feature>
<feature type="region of interest" description="Disordered" evidence="3">
    <location>
        <begin position="1"/>
        <end position="28"/>
    </location>
</feature>
<feature type="region of interest" description="Disordered" evidence="3">
    <location>
        <begin position="124"/>
        <end position="157"/>
    </location>
</feature>
<comment type="function">
    <text evidence="1">Component of the nascent polypeptide-associated complex (NAC), a dynamic component of the ribosomal exit tunnel, protecting the emerging polypeptides from interaction with other cytoplasmic proteins to ensure appropriate nascent protein targeting. The NAC complex also promotes mitochondrial protein import by enhancing productive ribosome interactions with the outer mitochondrial membrane and blocks the inappropriate interaction of ribosomes translating non-secretory nascent polypeptides with translocation sites in the membrane of the endoplasmic reticulum. EGD1 may act as a transcription factor that exert a negative effect on the expression of several genes that are transcribed by RNA polymerase II.</text>
</comment>
<comment type="subunit">
    <text evidence="1">Part of the nascent polypeptide-associated complex (NAC), consisting of EGD2 and EGD1. NAC associates with ribosomes via EGD1 (By similarity).</text>
</comment>
<comment type="subcellular location">
    <subcellularLocation>
        <location evidence="1">Cytoplasm</location>
    </subcellularLocation>
    <subcellularLocation>
        <location evidence="1">Nucleus</location>
    </subcellularLocation>
    <text evidence="1">Predominantly cytoplasmic, may also transiently localize to the nucleus.</text>
</comment>
<comment type="similarity">
    <text evidence="4">Belongs to the NAC-beta family.</text>
</comment>
<organism>
    <name type="scientific">Candida albicans (strain SC5314 / ATCC MYA-2876)</name>
    <name type="common">Yeast</name>
    <dbReference type="NCBI Taxonomy" id="237561"/>
    <lineage>
        <taxon>Eukaryota</taxon>
        <taxon>Fungi</taxon>
        <taxon>Dikarya</taxon>
        <taxon>Ascomycota</taxon>
        <taxon>Saccharomycotina</taxon>
        <taxon>Pichiomycetes</taxon>
        <taxon>Debaryomycetaceae</taxon>
        <taxon>Candida/Lodderomyces clade</taxon>
        <taxon>Candida</taxon>
    </lineage>
</organism>